<accession>Q7ANU5</accession>
<proteinExistence type="inferred from homology"/>
<name>RS17_LISIN</name>
<keyword id="KW-0687">Ribonucleoprotein</keyword>
<keyword id="KW-0689">Ribosomal protein</keyword>
<keyword id="KW-0694">RNA-binding</keyword>
<keyword id="KW-0699">rRNA-binding</keyword>
<sequence length="87" mass="10036">MADRNQRKVYTGRVVSDKMDKTITVVVETYKKHGLYGKRVKYSKKFKAHDENNIAKTGDVVRISETRPLSATKHFRLLEVVEEAVII</sequence>
<comment type="function">
    <text evidence="1">One of the primary rRNA binding proteins, it binds specifically to the 5'-end of 16S ribosomal RNA.</text>
</comment>
<comment type="subunit">
    <text evidence="1">Part of the 30S ribosomal subunit.</text>
</comment>
<comment type="similarity">
    <text evidence="1">Belongs to the universal ribosomal protein uS17 family.</text>
</comment>
<dbReference type="EMBL" id="AL596173">
    <property type="protein sequence ID" value="CAC97998.1"/>
    <property type="molecule type" value="Genomic_DNA"/>
</dbReference>
<dbReference type="RefSeq" id="WP_003720941.1">
    <property type="nucleotide sequence ID" value="NC_003212.1"/>
</dbReference>
<dbReference type="SMR" id="Q7ANU5"/>
<dbReference type="STRING" id="272626.gene:17567159"/>
<dbReference type="GeneID" id="93240504"/>
<dbReference type="KEGG" id="lin:rpsQ"/>
<dbReference type="eggNOG" id="COG0186">
    <property type="taxonomic scope" value="Bacteria"/>
</dbReference>
<dbReference type="HOGENOM" id="CLU_073626_1_0_9"/>
<dbReference type="OrthoDB" id="9811714at2"/>
<dbReference type="Proteomes" id="UP000002513">
    <property type="component" value="Chromosome"/>
</dbReference>
<dbReference type="GO" id="GO:0022627">
    <property type="term" value="C:cytosolic small ribosomal subunit"/>
    <property type="evidence" value="ECO:0007669"/>
    <property type="project" value="TreeGrafter"/>
</dbReference>
<dbReference type="GO" id="GO:0019843">
    <property type="term" value="F:rRNA binding"/>
    <property type="evidence" value="ECO:0007669"/>
    <property type="project" value="UniProtKB-UniRule"/>
</dbReference>
<dbReference type="GO" id="GO:0003735">
    <property type="term" value="F:structural constituent of ribosome"/>
    <property type="evidence" value="ECO:0007669"/>
    <property type="project" value="InterPro"/>
</dbReference>
<dbReference type="GO" id="GO:0006412">
    <property type="term" value="P:translation"/>
    <property type="evidence" value="ECO:0007669"/>
    <property type="project" value="UniProtKB-UniRule"/>
</dbReference>
<dbReference type="CDD" id="cd00364">
    <property type="entry name" value="Ribosomal_uS17"/>
    <property type="match status" value="1"/>
</dbReference>
<dbReference type="FunFam" id="2.40.50.140:FF:000026">
    <property type="entry name" value="30S ribosomal protein S17"/>
    <property type="match status" value="1"/>
</dbReference>
<dbReference type="Gene3D" id="2.40.50.140">
    <property type="entry name" value="Nucleic acid-binding proteins"/>
    <property type="match status" value="1"/>
</dbReference>
<dbReference type="HAMAP" id="MF_01345_B">
    <property type="entry name" value="Ribosomal_uS17_B"/>
    <property type="match status" value="1"/>
</dbReference>
<dbReference type="InterPro" id="IPR012340">
    <property type="entry name" value="NA-bd_OB-fold"/>
</dbReference>
<dbReference type="InterPro" id="IPR000266">
    <property type="entry name" value="Ribosomal_uS17"/>
</dbReference>
<dbReference type="InterPro" id="IPR019984">
    <property type="entry name" value="Ribosomal_uS17_bact/chlr"/>
</dbReference>
<dbReference type="InterPro" id="IPR019979">
    <property type="entry name" value="Ribosomal_uS17_CS"/>
</dbReference>
<dbReference type="NCBIfam" id="NF004123">
    <property type="entry name" value="PRK05610.1"/>
    <property type="match status" value="1"/>
</dbReference>
<dbReference type="NCBIfam" id="TIGR03635">
    <property type="entry name" value="uS17_bact"/>
    <property type="match status" value="1"/>
</dbReference>
<dbReference type="PANTHER" id="PTHR10744">
    <property type="entry name" value="40S RIBOSOMAL PROTEIN S11 FAMILY MEMBER"/>
    <property type="match status" value="1"/>
</dbReference>
<dbReference type="PANTHER" id="PTHR10744:SF1">
    <property type="entry name" value="SMALL RIBOSOMAL SUBUNIT PROTEIN US17M"/>
    <property type="match status" value="1"/>
</dbReference>
<dbReference type="Pfam" id="PF00366">
    <property type="entry name" value="Ribosomal_S17"/>
    <property type="match status" value="1"/>
</dbReference>
<dbReference type="PRINTS" id="PR00973">
    <property type="entry name" value="RIBOSOMALS17"/>
</dbReference>
<dbReference type="SUPFAM" id="SSF50249">
    <property type="entry name" value="Nucleic acid-binding proteins"/>
    <property type="match status" value="1"/>
</dbReference>
<dbReference type="PROSITE" id="PS00056">
    <property type="entry name" value="RIBOSOMAL_S17"/>
    <property type="match status" value="1"/>
</dbReference>
<protein>
    <recommendedName>
        <fullName evidence="1">Small ribosomal subunit protein uS17</fullName>
    </recommendedName>
    <alternativeName>
        <fullName evidence="2">30S ribosomal protein S17</fullName>
    </alternativeName>
</protein>
<organism>
    <name type="scientific">Listeria innocua serovar 6a (strain ATCC BAA-680 / CLIP 11262)</name>
    <dbReference type="NCBI Taxonomy" id="272626"/>
    <lineage>
        <taxon>Bacteria</taxon>
        <taxon>Bacillati</taxon>
        <taxon>Bacillota</taxon>
        <taxon>Bacilli</taxon>
        <taxon>Bacillales</taxon>
        <taxon>Listeriaceae</taxon>
        <taxon>Listeria</taxon>
    </lineage>
</organism>
<evidence type="ECO:0000255" key="1">
    <source>
        <dbReference type="HAMAP-Rule" id="MF_01345"/>
    </source>
</evidence>
<evidence type="ECO:0000305" key="2"/>
<gene>
    <name evidence="1" type="primary">rpsQ</name>
    <name type="ordered locus">lin2772</name>
</gene>
<reference key="1">
    <citation type="journal article" date="2001" name="Science">
        <title>Comparative genomics of Listeria species.</title>
        <authorList>
            <person name="Glaser P."/>
            <person name="Frangeul L."/>
            <person name="Buchrieser C."/>
            <person name="Rusniok C."/>
            <person name="Amend A."/>
            <person name="Baquero F."/>
            <person name="Berche P."/>
            <person name="Bloecker H."/>
            <person name="Brandt P."/>
            <person name="Chakraborty T."/>
            <person name="Charbit A."/>
            <person name="Chetouani F."/>
            <person name="Couve E."/>
            <person name="de Daruvar A."/>
            <person name="Dehoux P."/>
            <person name="Domann E."/>
            <person name="Dominguez-Bernal G."/>
            <person name="Duchaud E."/>
            <person name="Durant L."/>
            <person name="Dussurget O."/>
            <person name="Entian K.-D."/>
            <person name="Fsihi H."/>
            <person name="Garcia-del Portillo F."/>
            <person name="Garrido P."/>
            <person name="Gautier L."/>
            <person name="Goebel W."/>
            <person name="Gomez-Lopez N."/>
            <person name="Hain T."/>
            <person name="Hauf J."/>
            <person name="Jackson D."/>
            <person name="Jones L.-M."/>
            <person name="Kaerst U."/>
            <person name="Kreft J."/>
            <person name="Kuhn M."/>
            <person name="Kunst F."/>
            <person name="Kurapkat G."/>
            <person name="Madueno E."/>
            <person name="Maitournam A."/>
            <person name="Mata Vicente J."/>
            <person name="Ng E."/>
            <person name="Nedjari H."/>
            <person name="Nordsiek G."/>
            <person name="Novella S."/>
            <person name="de Pablos B."/>
            <person name="Perez-Diaz J.-C."/>
            <person name="Purcell R."/>
            <person name="Remmel B."/>
            <person name="Rose M."/>
            <person name="Schlueter T."/>
            <person name="Simoes N."/>
            <person name="Tierrez A."/>
            <person name="Vazquez-Boland J.-A."/>
            <person name="Voss H."/>
            <person name="Wehland J."/>
            <person name="Cossart P."/>
        </authorList>
    </citation>
    <scope>NUCLEOTIDE SEQUENCE [LARGE SCALE GENOMIC DNA]</scope>
    <source>
        <strain>ATCC BAA-680 / CLIP 11262</strain>
    </source>
</reference>
<feature type="chain" id="PRO_0000233499" description="Small ribosomal subunit protein uS17">
    <location>
        <begin position="1"/>
        <end position="87"/>
    </location>
</feature>